<protein>
    <recommendedName>
        <fullName evidence="3">Selina-4(15),7(11)-diene synthase ((2E,6E)-farnesyl diphosphate cyclizing)</fullName>
        <ecNumber evidence="1 2">4.2.3.181</ecNumber>
    </recommendedName>
    <alternativeName>
        <fullName evidence="4">Selinadiene synthase</fullName>
        <shortName evidence="4">SdS</shortName>
    </alternativeName>
    <alternativeName>
        <fullName evidence="3">Terpene synthase</fullName>
    </alternativeName>
    <alternativeName>
        <fullName evidence="3">Type I terpene cyclase</fullName>
    </alternativeName>
</protein>
<name>SEDS_STRE2</name>
<dbReference type="EC" id="4.2.3.181" evidence="1 2"/>
<dbReference type="EMBL" id="CM000950">
    <property type="protein sequence ID" value="EDY64907.2"/>
    <property type="molecule type" value="Genomic_DNA"/>
</dbReference>
<dbReference type="RefSeq" id="WP_005317515.1">
    <property type="nucleotide sequence ID" value="NZ_CM000950.1"/>
</dbReference>
<dbReference type="PDB" id="4OKM">
    <property type="method" value="X-ray"/>
    <property type="resolution" value="2.10 A"/>
    <property type="chains" value="A/B/C/D=1-365"/>
</dbReference>
<dbReference type="PDB" id="4OKZ">
    <property type="method" value="X-ray"/>
    <property type="resolution" value="1.90 A"/>
    <property type="chains" value="A/B/C/D=1-365"/>
</dbReference>
<dbReference type="PDBsum" id="4OKM"/>
<dbReference type="PDBsum" id="4OKZ"/>
<dbReference type="SMR" id="B5HDJ6"/>
<dbReference type="GeneID" id="97234080"/>
<dbReference type="eggNOG" id="COG0664">
    <property type="taxonomic scope" value="Bacteria"/>
</dbReference>
<dbReference type="HOGENOM" id="CLU_042538_4_2_11"/>
<dbReference type="BRENDA" id="4.2.3.181">
    <property type="organism ID" value="12737"/>
</dbReference>
<dbReference type="UniPathway" id="UPA00213"/>
<dbReference type="EvolutionaryTrace" id="B5HDJ6"/>
<dbReference type="Proteomes" id="UP000002805">
    <property type="component" value="Chromosome"/>
</dbReference>
<dbReference type="GO" id="GO:0000287">
    <property type="term" value="F:magnesium ion binding"/>
    <property type="evidence" value="ECO:0000314"/>
    <property type="project" value="UniProtKB"/>
</dbReference>
<dbReference type="GO" id="GO:0010333">
    <property type="term" value="F:terpene synthase activity"/>
    <property type="evidence" value="ECO:0000314"/>
    <property type="project" value="UniProtKB"/>
</dbReference>
<dbReference type="GO" id="GO:0016114">
    <property type="term" value="P:terpenoid biosynthetic process"/>
    <property type="evidence" value="ECO:0007669"/>
    <property type="project" value="UniProtKB-UniPathway"/>
</dbReference>
<dbReference type="Gene3D" id="1.10.600.10">
    <property type="entry name" value="Farnesyl Diphosphate Synthase"/>
    <property type="match status" value="1"/>
</dbReference>
<dbReference type="InterPro" id="IPR008949">
    <property type="entry name" value="Isoprenoid_synthase_dom_sf"/>
</dbReference>
<dbReference type="InterPro" id="IPR048143">
    <property type="entry name" value="Selin_dien_syn"/>
</dbReference>
<dbReference type="InterPro" id="IPR034686">
    <property type="entry name" value="Terpene_cyclase-like_2"/>
</dbReference>
<dbReference type="NCBIfam" id="NF041565">
    <property type="entry name" value="selin_dien_syn"/>
    <property type="match status" value="1"/>
</dbReference>
<dbReference type="PANTHER" id="PTHR35201:SF4">
    <property type="entry name" value="BETA-PINACENE SYNTHASE-RELATED"/>
    <property type="match status" value="1"/>
</dbReference>
<dbReference type="PANTHER" id="PTHR35201">
    <property type="entry name" value="TERPENE SYNTHASE"/>
    <property type="match status" value="1"/>
</dbReference>
<dbReference type="Pfam" id="PF19086">
    <property type="entry name" value="Terpene_syn_C_2"/>
    <property type="match status" value="1"/>
</dbReference>
<dbReference type="SFLD" id="SFLDS00005">
    <property type="entry name" value="Isoprenoid_Synthase_Type_I"/>
    <property type="match status" value="1"/>
</dbReference>
<dbReference type="SFLD" id="SFLDG01020">
    <property type="entry name" value="Terpene_Cyclase_Like_2"/>
    <property type="match status" value="1"/>
</dbReference>
<dbReference type="SUPFAM" id="SSF48576">
    <property type="entry name" value="Terpenoid synthases"/>
    <property type="match status" value="1"/>
</dbReference>
<comment type="function">
    <text evidence="1 2">Catalyzes the conversion of (2E,6E)-farnesyl diphosphate (FPP) to yield the bicyclic sesquiterpene selina-4(15),7(11)-diene via a 1,10-cyclization, which requires the abstraction of the pyrophosphate from FPP leading to a (E,E)-germacradienyl cation (PubMed:23307484, PubMed:24890698). The only accepted substrate is (2E,6E)-farnesyl diphosphate (FPP) (PubMed:23307484, PubMed:24890698).</text>
</comment>
<comment type="catalytic activity">
    <reaction evidence="1 2">
        <text>(2E,6E)-farnesyl diphosphate = selina-4(15),7(11)-diene + diphosphate</text>
        <dbReference type="Rhea" id="RHEA:54112"/>
        <dbReference type="ChEBI" id="CHEBI:33019"/>
        <dbReference type="ChEBI" id="CHEBI:138051"/>
        <dbReference type="ChEBI" id="CHEBI:175763"/>
        <dbReference type="EC" id="4.2.3.181"/>
    </reaction>
</comment>
<comment type="cofactor">
    <cofactor evidence="2">
        <name>Mg(2+)</name>
        <dbReference type="ChEBI" id="CHEBI:18420"/>
    </cofactor>
    <text evidence="2">Binds 3 Mg(2+) ions per subunit.</text>
</comment>
<comment type="pathway">
    <text evidence="6">Secondary metabolite biosynthesis; terpenoid biosynthesis.</text>
</comment>
<comment type="subunit">
    <text evidence="2">Monomer.</text>
</comment>
<comment type="domain">
    <text evidence="7">The Asp-Asp-Xaa-Xaa-Xaa-Glu (DDXXXE) motif is important for the catalytic activity, presumably through binding to Mg(2+).</text>
</comment>
<comment type="similarity">
    <text evidence="5">Belongs to the terpene synthase family.</text>
</comment>
<proteinExistence type="evidence at protein level"/>
<accession>B5HDJ6</accession>
<gene>
    <name evidence="8" type="ORF">SSDG_02809</name>
</gene>
<organism>
    <name type="scientific">Streptomyces pristinaespiralis (strain ATCC 25486 / DSM 40338 / CBS 914.69 / JCM 4507 / KCC S-0507 / NBRC 13074 / NRRL 2958 / 5647)</name>
    <dbReference type="NCBI Taxonomy" id="457429"/>
    <lineage>
        <taxon>Bacteria</taxon>
        <taxon>Bacillati</taxon>
        <taxon>Actinomycetota</taxon>
        <taxon>Actinomycetes</taxon>
        <taxon>Kitasatosporales</taxon>
        <taxon>Streptomycetaceae</taxon>
        <taxon>Streptomyces</taxon>
    </lineage>
</organism>
<reference key="1">
    <citation type="submission" date="2008-02" db="EMBL/GenBank/DDBJ databases">
        <authorList>
            <consortium name="The Broad Institute Genome Sequencing Platform"/>
            <person name="Fischbach M."/>
            <person name="Ward D."/>
            <person name="Young S."/>
            <person name="Jaffe D."/>
            <person name="Gnerre S."/>
            <person name="Berlin A."/>
            <person name="Heiman D."/>
            <person name="Hepburn T."/>
            <person name="Sykes S."/>
            <person name="Alvarado L."/>
            <person name="Kodira C.D."/>
            <person name="Straight P."/>
            <person name="Clardy J."/>
            <person name="Hung D."/>
            <person name="Kolter R."/>
            <person name="Mekalanos J."/>
            <person name="Walker S."/>
            <person name="Walsh C.T."/>
            <person name="Lander E."/>
            <person name="Galagan J."/>
            <person name="Nusbaum C."/>
            <person name="Birren B."/>
        </authorList>
    </citation>
    <scope>NUCLEOTIDE SEQUENCE [LARGE SCALE GENOMIC DNA]</scope>
    <source>
        <strain evidence="9">ATCC 25486 / DSM 40338 / CBS 914.69 / JCM 4507 / KCC S-0507 / NBRC 13074 / NRRL 2958 / 5647</strain>
    </source>
</reference>
<reference key="2">
    <citation type="submission" date="2009-10" db="EMBL/GenBank/DDBJ databases">
        <title>The genome sequence of Streptomyces pristinaespiralis strain ATCC 25486.</title>
        <authorList>
            <consortium name="The Broad Institute Genome Sequencing Platform"/>
            <consortium name="Broad Institute Microbial Sequencing Center"/>
            <person name="Fischbach M."/>
            <person name="Godfrey P."/>
            <person name="Ward D."/>
            <person name="Young S."/>
            <person name="Zeng Q."/>
            <person name="Koehrsen M."/>
            <person name="Alvarado L."/>
            <person name="Berlin A.M."/>
            <person name="Bochicchio J."/>
            <person name="Borenstein D."/>
            <person name="Chapman S.B."/>
            <person name="Chen Z."/>
            <person name="Engels R."/>
            <person name="Freedman E."/>
            <person name="Gellesch M."/>
            <person name="Goldberg J."/>
            <person name="Griggs A."/>
            <person name="Gujja S."/>
            <person name="Heilman E.R."/>
            <person name="Heiman D.I."/>
            <person name="Hepburn T.A."/>
            <person name="Howarth C."/>
            <person name="Jen D."/>
            <person name="Larson L."/>
            <person name="Lewis B."/>
            <person name="Mehta T."/>
            <person name="Park D."/>
            <person name="Pearson M."/>
            <person name="Richards J."/>
            <person name="Roberts A."/>
            <person name="Saif S."/>
            <person name="Shea T.D."/>
            <person name="Shenoy N."/>
            <person name="Sisk P."/>
            <person name="Stolte C."/>
            <person name="Sykes S.N."/>
            <person name="Thomson T."/>
            <person name="Walk T."/>
            <person name="White J."/>
            <person name="Yandava C."/>
            <person name="Straight P."/>
            <person name="Clardy J."/>
            <person name="Hung D."/>
            <person name="Kolter R."/>
            <person name="Mekalanos J."/>
            <person name="Walker S."/>
            <person name="Walsh C.T."/>
            <person name="Wieland-Brown L.C."/>
            <person name="Haas B."/>
            <person name="Nusbaum C."/>
            <person name="Birren B."/>
        </authorList>
    </citation>
    <scope>NUCLEOTIDE SEQUENCE [LARGE SCALE GENOMIC DNA]</scope>
    <source>
        <strain evidence="8 9">ATCC 25486 / DSM 40338 / CBS 914.69 / JCM 4507 / KCC S-0507 / NBRC 13074 / NRRL 2958 / 5647</strain>
    </source>
</reference>
<reference key="3">
    <citation type="journal article" date="2013" name="Angew. Chem. Int. Ed.">
        <title>Rapid chemical characterization of bacterial terpene synthases.</title>
        <authorList>
            <person name="Rabe P."/>
            <person name="Dickschat J.S."/>
        </authorList>
    </citation>
    <scope>FUNCTION</scope>
    <scope>CATALYTIC ACTIVITY</scope>
    <scope>SUBSTRATE SPECIFICITY</scope>
    <scope>PATHWAY</scope>
    <source>
        <strain>ATCC 25486 / DSM 40338 / CBS 914.69 / JCM 4507 / KCC S-0507 / NBRC 13074 / NRRL 2958 / 5647</strain>
    </source>
</reference>
<reference key="4">
    <citation type="journal article" date="2014" name="Angew. Chem. Int. Ed.">
        <title>Induced-fit mechanism in class I terpene cyclases.</title>
        <authorList>
            <person name="Baer P."/>
            <person name="Rabe P."/>
            <person name="Fischer K."/>
            <person name="Citron C.A."/>
            <person name="Klapschinski T.A."/>
            <person name="Groll M."/>
            <person name="Dickschat J.S."/>
        </authorList>
    </citation>
    <scope>X-RAY CRYSTALLOGRAPHY (1.90 ANGSTROMS) IN COMPLEX WITH MAGNESIUM IONS AND SUBSTRATE ANALOGS</scope>
    <scope>FUNCTION</scope>
    <scope>CATALYTIC ACTIVITY</scope>
    <scope>COFACTOR</scope>
    <scope>MUTAGENESIS OF PHE-55; PHE-79; ASP-83; GLU-159; ARG-178; GLY-182 AND ALA-183</scope>
    <scope>SUBSTRATE SPECIFICITY</scope>
    <scope>REACTION MECHANISM</scope>
    <scope>DOMAIN</scope>
    <scope>SUBUNIT</scope>
    <source>
        <strain>ATCC 25486 / DSM 40338 / CBS 914.69 / JCM 4507 / KCC S-0507 / NBRC 13074 / NRRL 2958 / 5647</strain>
    </source>
</reference>
<sequence>MEPELTVPPLFSPIRQAIHPKHADIDVQTAAWAETFRIGSEELRGKLVTQDIGTFSARILPEGREEVVSLLADFILWLFGVDDGHCEEGELGHRPGDLAGLLHRLIRVAQNPEAPMMQDDPLAAGLRDLRMRVDRFGTAGQTARWVDALREYFFSVVWEAAHRRAGTVPDLNDYTLMRLYDGATSVVLPMLEMGHGYELQPYERDRTAVRAVAEMASFIITWDNDIFSYHKERRGSGYYLNALRVLEQERGLTPAQALDAAISQRDRVMCLFTTVSEQLAEQGSPQLRQYLHSLRCFIRGAQDWGISSVRYTTPDDPANMPSVFTDVPTDDSTEPLDIPAVSWWWDLLAEDARSVRRQVPAQRSA</sequence>
<feature type="chain" id="PRO_0000443243" description="Selina-4(15),7(11)-diene synthase ((2E,6E)-farnesyl diphosphate cyclizing)">
    <location>
        <begin position="1"/>
        <end position="365"/>
    </location>
</feature>
<feature type="short sequence motif" description="DDXXXE motif" evidence="7">
    <location>
        <begin position="82"/>
        <end position="87"/>
    </location>
</feature>
<feature type="binding site" evidence="2 10 11">
    <location>
        <position position="82"/>
    </location>
    <ligand>
        <name>Mg(2+)</name>
        <dbReference type="ChEBI" id="CHEBI:18420"/>
        <label>1</label>
    </ligand>
</feature>
<feature type="binding site" evidence="2 10 11">
    <location>
        <position position="87"/>
    </location>
    <ligand>
        <name>Mg(2+)</name>
        <dbReference type="ChEBI" id="CHEBI:18420"/>
        <label>1</label>
    </ligand>
</feature>
<feature type="binding site" evidence="2 10 11">
    <location>
        <position position="87"/>
    </location>
    <ligand>
        <name>Mg(2+)</name>
        <dbReference type="ChEBI" id="CHEBI:18420"/>
        <label>2</label>
    </ligand>
</feature>
<feature type="binding site" evidence="2 10 11">
    <location>
        <position position="178"/>
    </location>
    <ligand>
        <name>substrate</name>
    </ligand>
</feature>
<feature type="binding site" evidence="2 10 11">
    <location>
        <position position="224"/>
    </location>
    <ligand>
        <name>Mg(2+)</name>
        <dbReference type="ChEBI" id="CHEBI:18420"/>
        <label>3</label>
    </ligand>
</feature>
<feature type="binding site" evidence="2 10 11">
    <location>
        <position position="228"/>
    </location>
    <ligand>
        <name>Mg(2+)</name>
        <dbReference type="ChEBI" id="CHEBI:18420"/>
        <label>3</label>
    </ligand>
</feature>
<feature type="binding site" evidence="2 11">
    <location>
        <position position="231"/>
    </location>
    <ligand>
        <name>substrate</name>
    </ligand>
</feature>
<feature type="binding site" evidence="2 10 11">
    <location>
        <position position="232"/>
    </location>
    <ligand>
        <name>Mg(2+)</name>
        <dbReference type="ChEBI" id="CHEBI:18420"/>
        <label>3</label>
    </ligand>
</feature>
<feature type="binding site" evidence="2 10 11">
    <location>
        <begin position="310"/>
        <end position="311"/>
    </location>
    <ligand>
        <name>substrate</name>
    </ligand>
</feature>
<feature type="site" description="Plays a critical role in the stabilization of intermediate cation" evidence="2">
    <location>
        <position position="55"/>
    </location>
</feature>
<feature type="site" description="Plays a critical role in the stabilization of intermediate cation" evidence="2">
    <location>
        <position position="79"/>
    </location>
</feature>
<feature type="site" description="Plays a critical role for substrate recognition" evidence="2">
    <location>
        <position position="83"/>
    </location>
</feature>
<feature type="site" description="Plays a critical role for substrate recognition" evidence="2">
    <location>
        <position position="159"/>
    </location>
</feature>
<feature type="site" description="Plays a critical role for abstraction of the pyrophosphate group" evidence="2">
    <location>
        <position position="182"/>
    </location>
</feature>
<feature type="mutagenesis site" description="Drastically alters the product spectra compared to the wild-type, comprising linear terpenoids in addition to selina-4(15),7(11)-diene and germacrene B. Yields only a small amount of selina-4(15),7(11)-diene along with a considerable increase of germacrene B." evidence="2">
    <original>F</original>
    <variation>L</variation>
    <variation>W</variation>
    <variation>Y</variation>
    <location>
        <position position="55"/>
    </location>
</feature>
<feature type="mutagenesis site" description="Drastically alters the product spectra compared to the wild-type, comprising linear terpenoids in addition to selina-4(15),7(11)-diene and germacrene B. Yields only a small amount of selina-4(15),7(11)-diene along with a considerable increase of germacrene B." evidence="2">
    <original>F</original>
    <variation>L</variation>
    <variation>W</variation>
    <variation>Y</variation>
    <location>
        <position position="79"/>
    </location>
</feature>
<feature type="mutagenesis site" description="Drastically alters the product spectra compared to the wild-type, comprising linear terpenoids in addition to germacrene B. Unable to produce selina-4(15),7(11)-diene." evidence="2">
    <original>D</original>
    <variation>E</variation>
    <variation>N</variation>
    <location>
        <position position="83"/>
    </location>
</feature>
<feature type="mutagenesis site" description="Drastically alters the product spectra compared to the wild-type, comprising linear terpenoids in addition to germacrene B. Unable to produce selina-4(15),7(11)-diene." evidence="2">
    <original>E</original>
    <variation>D</variation>
    <variation>Q</variation>
    <location>
        <position position="159"/>
    </location>
</feature>
<feature type="mutagenesis site" description="Lack of cyclase activity." evidence="2">
    <original>R</original>
    <variation>K</variation>
    <variation>N</variation>
    <variation>Q</variation>
    <location>
        <position position="178"/>
    </location>
</feature>
<feature type="mutagenesis site" description="Drastically alters the product spectra compared to the wild-type, comprising linear terpenoids in addition to selina-4(15),7(11)-diene and germacrene B. Yields only a small amount of selina-4(15),7(11)-diene along with a considerable increase of germacrene B." evidence="2">
    <original>G</original>
    <variation>A</variation>
    <location>
        <position position="182"/>
    </location>
</feature>
<feature type="mutagenesis site" description="Lack of cyclase activity." evidence="2">
    <original>G</original>
    <variation>P</variation>
    <variation>V</variation>
    <location>
        <position position="182"/>
    </location>
</feature>
<feature type="mutagenesis site" description="Lack of cyclase activity." evidence="2">
    <original>A</original>
    <variation>F</variation>
    <variation>V</variation>
    <location>
        <position position="183"/>
    </location>
</feature>
<feature type="helix" evidence="12">
    <location>
        <begin position="22"/>
        <end position="35"/>
    </location>
</feature>
<feature type="helix" evidence="12">
    <location>
        <begin position="41"/>
        <end position="47"/>
    </location>
</feature>
<feature type="helix" evidence="12">
    <location>
        <begin position="52"/>
        <end position="59"/>
    </location>
</feature>
<feature type="helix" evidence="12">
    <location>
        <begin position="65"/>
        <end position="82"/>
    </location>
</feature>
<feature type="helix" evidence="12">
    <location>
        <begin position="83"/>
        <end position="87"/>
    </location>
</feature>
<feature type="helix" evidence="12">
    <location>
        <begin position="90"/>
        <end position="93"/>
    </location>
</feature>
<feature type="helix" evidence="12">
    <location>
        <begin position="95"/>
        <end position="110"/>
    </location>
</feature>
<feature type="strand" evidence="12">
    <location>
        <begin position="114"/>
        <end position="117"/>
    </location>
</feature>
<feature type="helix" evidence="12">
    <location>
        <begin position="121"/>
        <end position="136"/>
    </location>
</feature>
<feature type="helix" evidence="12">
    <location>
        <begin position="139"/>
        <end position="165"/>
    </location>
</feature>
<feature type="helix" evidence="12">
    <location>
        <begin position="171"/>
        <end position="181"/>
    </location>
</feature>
<feature type="helix" evidence="12">
    <location>
        <begin position="184"/>
        <end position="193"/>
    </location>
</feature>
<feature type="turn" evidence="12">
    <location>
        <begin position="194"/>
        <end position="196"/>
    </location>
</feature>
<feature type="helix" evidence="12">
    <location>
        <begin position="201"/>
        <end position="204"/>
    </location>
</feature>
<feature type="helix" evidence="12">
    <location>
        <begin position="207"/>
        <end position="233"/>
    </location>
</feature>
<feature type="strand" evidence="12">
    <location>
        <begin position="235"/>
        <end position="237"/>
    </location>
</feature>
<feature type="helix" evidence="12">
    <location>
        <begin position="242"/>
        <end position="250"/>
    </location>
</feature>
<feature type="helix" evidence="12">
    <location>
        <begin position="254"/>
        <end position="282"/>
    </location>
</feature>
<feature type="helix" evidence="12">
    <location>
        <begin position="285"/>
        <end position="305"/>
    </location>
</feature>
<feature type="helix" evidence="12">
    <location>
        <begin position="309"/>
        <end position="312"/>
    </location>
</feature>
<feature type="strand" evidence="12">
    <location>
        <begin position="325"/>
        <end position="327"/>
    </location>
</feature>
<feature type="turn" evidence="12">
    <location>
        <begin position="339"/>
        <end position="341"/>
    </location>
</feature>
<feature type="helix" evidence="12">
    <location>
        <begin position="342"/>
        <end position="347"/>
    </location>
</feature>
<keyword id="KW-0002">3D-structure</keyword>
<keyword id="KW-0456">Lyase</keyword>
<keyword id="KW-0460">Magnesium</keyword>
<keyword id="KW-0479">Metal-binding</keyword>
<keyword id="KW-1185">Reference proteome</keyword>
<evidence type="ECO:0000269" key="1">
    <source>
    </source>
</evidence>
<evidence type="ECO:0000269" key="2">
    <source>
    </source>
</evidence>
<evidence type="ECO:0000303" key="3">
    <source>
    </source>
</evidence>
<evidence type="ECO:0000303" key="4">
    <source>
    </source>
</evidence>
<evidence type="ECO:0000305" key="5"/>
<evidence type="ECO:0000305" key="6">
    <source>
    </source>
</evidence>
<evidence type="ECO:0000305" key="7">
    <source>
    </source>
</evidence>
<evidence type="ECO:0000312" key="8">
    <source>
        <dbReference type="EMBL" id="EDY64907.2"/>
    </source>
</evidence>
<evidence type="ECO:0000312" key="9">
    <source>
        <dbReference type="Proteomes" id="UP000002805"/>
    </source>
</evidence>
<evidence type="ECO:0007744" key="10">
    <source>
        <dbReference type="PDB" id="4OKM"/>
    </source>
</evidence>
<evidence type="ECO:0007744" key="11">
    <source>
        <dbReference type="PDB" id="4OKZ"/>
    </source>
</evidence>
<evidence type="ECO:0007829" key="12">
    <source>
        <dbReference type="PDB" id="4OKZ"/>
    </source>
</evidence>